<feature type="chain" id="PRO_1000131832" description="Probable Fe(2+)-trafficking protein">
    <location>
        <begin position="1"/>
        <end position="91"/>
    </location>
</feature>
<gene>
    <name type="ordered locus">Bphy_1490</name>
</gene>
<name>FETP_PARP8</name>
<reference key="1">
    <citation type="journal article" date="2014" name="Stand. Genomic Sci.">
        <title>Complete genome sequence of Burkholderia phymatum STM815(T), a broad host range and efficient nitrogen-fixing symbiont of Mimosa species.</title>
        <authorList>
            <person name="Moulin L."/>
            <person name="Klonowska A."/>
            <person name="Caroline B."/>
            <person name="Booth K."/>
            <person name="Vriezen J.A."/>
            <person name="Melkonian R."/>
            <person name="James E.K."/>
            <person name="Young J.P."/>
            <person name="Bena G."/>
            <person name="Hauser L."/>
            <person name="Land M."/>
            <person name="Kyrpides N."/>
            <person name="Bruce D."/>
            <person name="Chain P."/>
            <person name="Copeland A."/>
            <person name="Pitluck S."/>
            <person name="Woyke T."/>
            <person name="Lizotte-Waniewski M."/>
            <person name="Bristow J."/>
            <person name="Riley M."/>
        </authorList>
    </citation>
    <scope>NUCLEOTIDE SEQUENCE [LARGE SCALE GENOMIC DNA]</scope>
    <source>
        <strain>DSM 17167 / CIP 108236 / LMG 21445 / STM815</strain>
    </source>
</reference>
<comment type="function">
    <text evidence="1">Could be a mediator in iron transactions between iron acquisition and iron-requiring processes, such as synthesis and/or repair of Fe-S clusters in biosynthetic enzymes.</text>
</comment>
<comment type="similarity">
    <text evidence="1">Belongs to the Fe(2+)-trafficking protein family.</text>
</comment>
<organism>
    <name type="scientific">Paraburkholderia phymatum (strain DSM 17167 / CIP 108236 / LMG 21445 / STM815)</name>
    <name type="common">Burkholderia phymatum</name>
    <dbReference type="NCBI Taxonomy" id="391038"/>
    <lineage>
        <taxon>Bacteria</taxon>
        <taxon>Pseudomonadati</taxon>
        <taxon>Pseudomonadota</taxon>
        <taxon>Betaproteobacteria</taxon>
        <taxon>Burkholderiales</taxon>
        <taxon>Burkholderiaceae</taxon>
        <taxon>Paraburkholderia</taxon>
    </lineage>
</organism>
<accession>B2JJC9</accession>
<keyword id="KW-0408">Iron</keyword>
<keyword id="KW-1185">Reference proteome</keyword>
<sequence>MTRMVQCTKLGKEAEGLDFPPLPGELGKRIYESISKEAWQQWLKQQTMLINENRLNMADPRARQYLMKQTEKFFFGEGADQASGYVPPAQG</sequence>
<dbReference type="EMBL" id="CP001043">
    <property type="protein sequence ID" value="ACC70672.1"/>
    <property type="molecule type" value="Genomic_DNA"/>
</dbReference>
<dbReference type="RefSeq" id="WP_012400884.1">
    <property type="nucleotide sequence ID" value="NZ_CADFGH010000003.1"/>
</dbReference>
<dbReference type="SMR" id="B2JJC9"/>
<dbReference type="STRING" id="391038.Bphy_1490"/>
<dbReference type="KEGG" id="bph:Bphy_1490"/>
<dbReference type="eggNOG" id="COG2924">
    <property type="taxonomic scope" value="Bacteria"/>
</dbReference>
<dbReference type="HOGENOM" id="CLU_170994_0_0_4"/>
<dbReference type="OrthoDB" id="9804318at2"/>
<dbReference type="Proteomes" id="UP000001192">
    <property type="component" value="Chromosome 1"/>
</dbReference>
<dbReference type="GO" id="GO:0005829">
    <property type="term" value="C:cytosol"/>
    <property type="evidence" value="ECO:0007669"/>
    <property type="project" value="TreeGrafter"/>
</dbReference>
<dbReference type="GO" id="GO:0005506">
    <property type="term" value="F:iron ion binding"/>
    <property type="evidence" value="ECO:0007669"/>
    <property type="project" value="UniProtKB-UniRule"/>
</dbReference>
<dbReference type="GO" id="GO:0034599">
    <property type="term" value="P:cellular response to oxidative stress"/>
    <property type="evidence" value="ECO:0007669"/>
    <property type="project" value="TreeGrafter"/>
</dbReference>
<dbReference type="FunFam" id="1.10.3880.10:FF:000001">
    <property type="entry name" value="Probable Fe(2+)-trafficking protein"/>
    <property type="match status" value="1"/>
</dbReference>
<dbReference type="Gene3D" id="1.10.3880.10">
    <property type="entry name" value="Fe(II) trafficking protein YggX"/>
    <property type="match status" value="1"/>
</dbReference>
<dbReference type="HAMAP" id="MF_00686">
    <property type="entry name" value="Fe_traffic_YggX"/>
    <property type="match status" value="1"/>
</dbReference>
<dbReference type="InterPro" id="IPR007457">
    <property type="entry name" value="Fe_traffick_prot_YggX"/>
</dbReference>
<dbReference type="InterPro" id="IPR036766">
    <property type="entry name" value="Fe_traffick_prot_YggX_sf"/>
</dbReference>
<dbReference type="NCBIfam" id="NF003817">
    <property type="entry name" value="PRK05408.1"/>
    <property type="match status" value="1"/>
</dbReference>
<dbReference type="PANTHER" id="PTHR36965">
    <property type="entry name" value="FE(2+)-TRAFFICKING PROTEIN-RELATED"/>
    <property type="match status" value="1"/>
</dbReference>
<dbReference type="PANTHER" id="PTHR36965:SF1">
    <property type="entry name" value="FE(2+)-TRAFFICKING PROTEIN-RELATED"/>
    <property type="match status" value="1"/>
</dbReference>
<dbReference type="Pfam" id="PF04362">
    <property type="entry name" value="Iron_traffic"/>
    <property type="match status" value="1"/>
</dbReference>
<dbReference type="PIRSF" id="PIRSF029827">
    <property type="entry name" value="Fe_traffic_YggX"/>
    <property type="match status" value="1"/>
</dbReference>
<dbReference type="SUPFAM" id="SSF111148">
    <property type="entry name" value="YggX-like"/>
    <property type="match status" value="1"/>
</dbReference>
<proteinExistence type="inferred from homology"/>
<protein>
    <recommendedName>
        <fullName evidence="1">Probable Fe(2+)-trafficking protein</fullName>
    </recommendedName>
</protein>
<evidence type="ECO:0000255" key="1">
    <source>
        <dbReference type="HAMAP-Rule" id="MF_00686"/>
    </source>
</evidence>